<feature type="chain" id="PRO_0000187846" description="Peptidyl-tRNA hydrolase">
    <location>
        <begin position="1"/>
        <end position="202"/>
    </location>
</feature>
<feature type="active site" description="Proton acceptor" evidence="1">
    <location>
        <position position="21"/>
    </location>
</feature>
<feature type="binding site" evidence="1">
    <location>
        <position position="16"/>
    </location>
    <ligand>
        <name>tRNA</name>
        <dbReference type="ChEBI" id="CHEBI:17843"/>
    </ligand>
</feature>
<feature type="binding site" evidence="1">
    <location>
        <position position="68"/>
    </location>
    <ligand>
        <name>tRNA</name>
        <dbReference type="ChEBI" id="CHEBI:17843"/>
    </ligand>
</feature>
<feature type="binding site" evidence="1">
    <location>
        <position position="70"/>
    </location>
    <ligand>
        <name>tRNA</name>
        <dbReference type="ChEBI" id="CHEBI:17843"/>
    </ligand>
</feature>
<feature type="binding site" evidence="1">
    <location>
        <position position="116"/>
    </location>
    <ligand>
        <name>tRNA</name>
        <dbReference type="ChEBI" id="CHEBI:17843"/>
    </ligand>
</feature>
<feature type="site" description="Discriminates between blocked and unblocked aminoacyl-tRNA" evidence="1">
    <location>
        <position position="11"/>
    </location>
</feature>
<feature type="site" description="Stabilizes the basic form of H active site to accept a proton" evidence="1">
    <location>
        <position position="95"/>
    </location>
</feature>
<organism>
    <name type="scientific">Treponema pallidum (strain Nichols)</name>
    <dbReference type="NCBI Taxonomy" id="243276"/>
    <lineage>
        <taxon>Bacteria</taxon>
        <taxon>Pseudomonadati</taxon>
        <taxon>Spirochaetota</taxon>
        <taxon>Spirochaetia</taxon>
        <taxon>Spirochaetales</taxon>
        <taxon>Treponemataceae</taxon>
        <taxon>Treponema</taxon>
    </lineage>
</organism>
<sequence length="202" mass="22178">MGIQLIVFLGNPGAEYEETRHNAAWLLLTYLFPSIVLPWRCGCRGSIARIEGFEGSSEEVWLLKPLTYMNRSGKSVGAACAFLQTDAKQLLVVHDELELPFGVVSLKQGGGLGGHNGLRSIKEVLGTADFWRLRIGIGRPPSESVNIAQYVLSAFYPAEMAAFPKLGRATRDLLCQLVVTDQAATVTLLSAWRKKRLLSLCE</sequence>
<accession>O83975</accession>
<name>PTH_TREPA</name>
<gene>
    <name evidence="1" type="primary">pth</name>
    <name type="ordered locus">TP_1011</name>
</gene>
<dbReference type="EC" id="3.1.1.29" evidence="1"/>
<dbReference type="EMBL" id="AE000520">
    <property type="protein sequence ID" value="AAC65962.1"/>
    <property type="molecule type" value="Genomic_DNA"/>
</dbReference>
<dbReference type="PIR" id="G71252">
    <property type="entry name" value="G71252"/>
</dbReference>
<dbReference type="RefSeq" id="WP_010882455.1">
    <property type="nucleotide sequence ID" value="NC_021490.2"/>
</dbReference>
<dbReference type="SMR" id="O83975"/>
<dbReference type="IntAct" id="O83975">
    <property type="interactions" value="4"/>
</dbReference>
<dbReference type="STRING" id="243276.TP_1011"/>
<dbReference type="EnsemblBacteria" id="AAC65962">
    <property type="protein sequence ID" value="AAC65962"/>
    <property type="gene ID" value="TP_1011"/>
</dbReference>
<dbReference type="GeneID" id="93876758"/>
<dbReference type="KEGG" id="tpa:TP_1011"/>
<dbReference type="KEGG" id="tpw:TPANIC_1011"/>
<dbReference type="eggNOG" id="COG0193">
    <property type="taxonomic scope" value="Bacteria"/>
</dbReference>
<dbReference type="HOGENOM" id="CLU_062456_4_2_12"/>
<dbReference type="OrthoDB" id="9800507at2"/>
<dbReference type="Proteomes" id="UP000000811">
    <property type="component" value="Chromosome"/>
</dbReference>
<dbReference type="GO" id="GO:0005737">
    <property type="term" value="C:cytoplasm"/>
    <property type="evidence" value="ECO:0007669"/>
    <property type="project" value="UniProtKB-SubCell"/>
</dbReference>
<dbReference type="GO" id="GO:0004045">
    <property type="term" value="F:peptidyl-tRNA hydrolase activity"/>
    <property type="evidence" value="ECO:0007669"/>
    <property type="project" value="UniProtKB-UniRule"/>
</dbReference>
<dbReference type="GO" id="GO:0000049">
    <property type="term" value="F:tRNA binding"/>
    <property type="evidence" value="ECO:0007669"/>
    <property type="project" value="UniProtKB-UniRule"/>
</dbReference>
<dbReference type="GO" id="GO:0006515">
    <property type="term" value="P:protein quality control for misfolded or incompletely synthesized proteins"/>
    <property type="evidence" value="ECO:0007669"/>
    <property type="project" value="UniProtKB-UniRule"/>
</dbReference>
<dbReference type="GO" id="GO:0072344">
    <property type="term" value="P:rescue of stalled ribosome"/>
    <property type="evidence" value="ECO:0007669"/>
    <property type="project" value="UniProtKB-UniRule"/>
</dbReference>
<dbReference type="CDD" id="cd00462">
    <property type="entry name" value="PTH"/>
    <property type="match status" value="1"/>
</dbReference>
<dbReference type="Gene3D" id="3.40.50.1470">
    <property type="entry name" value="Peptidyl-tRNA hydrolase"/>
    <property type="match status" value="1"/>
</dbReference>
<dbReference type="HAMAP" id="MF_00083">
    <property type="entry name" value="Pept_tRNA_hydro_bact"/>
    <property type="match status" value="1"/>
</dbReference>
<dbReference type="InterPro" id="IPR001328">
    <property type="entry name" value="Pept_tRNA_hydro"/>
</dbReference>
<dbReference type="InterPro" id="IPR018171">
    <property type="entry name" value="Pept_tRNA_hydro_CS"/>
</dbReference>
<dbReference type="InterPro" id="IPR036416">
    <property type="entry name" value="Pept_tRNA_hydro_sf"/>
</dbReference>
<dbReference type="NCBIfam" id="TIGR00447">
    <property type="entry name" value="pth"/>
    <property type="match status" value="1"/>
</dbReference>
<dbReference type="PANTHER" id="PTHR17224">
    <property type="entry name" value="PEPTIDYL-TRNA HYDROLASE"/>
    <property type="match status" value="1"/>
</dbReference>
<dbReference type="PANTHER" id="PTHR17224:SF1">
    <property type="entry name" value="PEPTIDYL-TRNA HYDROLASE"/>
    <property type="match status" value="1"/>
</dbReference>
<dbReference type="Pfam" id="PF01195">
    <property type="entry name" value="Pept_tRNA_hydro"/>
    <property type="match status" value="1"/>
</dbReference>
<dbReference type="SUPFAM" id="SSF53178">
    <property type="entry name" value="Peptidyl-tRNA hydrolase-like"/>
    <property type="match status" value="1"/>
</dbReference>
<dbReference type="PROSITE" id="PS01196">
    <property type="entry name" value="PEPT_TRNA_HYDROL_2"/>
    <property type="match status" value="1"/>
</dbReference>
<reference key="1">
    <citation type="journal article" date="1998" name="Science">
        <title>Complete genome sequence of Treponema pallidum, the syphilis spirochete.</title>
        <authorList>
            <person name="Fraser C.M."/>
            <person name="Norris S.J."/>
            <person name="Weinstock G.M."/>
            <person name="White O."/>
            <person name="Sutton G.G."/>
            <person name="Dodson R.J."/>
            <person name="Gwinn M.L."/>
            <person name="Hickey E.K."/>
            <person name="Clayton R.A."/>
            <person name="Ketchum K.A."/>
            <person name="Sodergren E."/>
            <person name="Hardham J.M."/>
            <person name="McLeod M.P."/>
            <person name="Salzberg S.L."/>
            <person name="Peterson J.D."/>
            <person name="Khalak H.G."/>
            <person name="Richardson D.L."/>
            <person name="Howell J.K."/>
            <person name="Chidambaram M."/>
            <person name="Utterback T.R."/>
            <person name="McDonald L.A."/>
            <person name="Artiach P."/>
            <person name="Bowman C."/>
            <person name="Cotton M.D."/>
            <person name="Fujii C."/>
            <person name="Garland S.A."/>
            <person name="Hatch B."/>
            <person name="Horst K."/>
            <person name="Roberts K.M."/>
            <person name="Sandusky M."/>
            <person name="Weidman J.F."/>
            <person name="Smith H.O."/>
            <person name="Venter J.C."/>
        </authorList>
    </citation>
    <scope>NUCLEOTIDE SEQUENCE [LARGE SCALE GENOMIC DNA]</scope>
    <source>
        <strain>Nichols</strain>
    </source>
</reference>
<evidence type="ECO:0000255" key="1">
    <source>
        <dbReference type="HAMAP-Rule" id="MF_00083"/>
    </source>
</evidence>
<comment type="function">
    <text evidence="1">Hydrolyzes ribosome-free peptidyl-tRNAs (with 1 or more amino acids incorporated), which drop off the ribosome during protein synthesis, or as a result of ribosome stalling.</text>
</comment>
<comment type="function">
    <text evidence="1">Catalyzes the release of premature peptidyl moieties from peptidyl-tRNA molecules trapped in stalled 50S ribosomal subunits, and thus maintains levels of free tRNAs and 50S ribosomes.</text>
</comment>
<comment type="catalytic activity">
    <reaction evidence="1">
        <text>an N-acyl-L-alpha-aminoacyl-tRNA + H2O = an N-acyl-L-amino acid + a tRNA + H(+)</text>
        <dbReference type="Rhea" id="RHEA:54448"/>
        <dbReference type="Rhea" id="RHEA-COMP:10123"/>
        <dbReference type="Rhea" id="RHEA-COMP:13883"/>
        <dbReference type="ChEBI" id="CHEBI:15377"/>
        <dbReference type="ChEBI" id="CHEBI:15378"/>
        <dbReference type="ChEBI" id="CHEBI:59874"/>
        <dbReference type="ChEBI" id="CHEBI:78442"/>
        <dbReference type="ChEBI" id="CHEBI:138191"/>
        <dbReference type="EC" id="3.1.1.29"/>
    </reaction>
</comment>
<comment type="subunit">
    <text evidence="1">Monomer.</text>
</comment>
<comment type="subcellular location">
    <subcellularLocation>
        <location evidence="1">Cytoplasm</location>
    </subcellularLocation>
</comment>
<comment type="similarity">
    <text evidence="1">Belongs to the PTH family.</text>
</comment>
<protein>
    <recommendedName>
        <fullName evidence="1">Peptidyl-tRNA hydrolase</fullName>
        <shortName evidence="1">Pth</shortName>
        <ecNumber evidence="1">3.1.1.29</ecNumber>
    </recommendedName>
</protein>
<keyword id="KW-0963">Cytoplasm</keyword>
<keyword id="KW-0378">Hydrolase</keyword>
<keyword id="KW-1185">Reference proteome</keyword>
<keyword id="KW-0694">RNA-binding</keyword>
<keyword id="KW-0820">tRNA-binding</keyword>
<proteinExistence type="inferred from homology"/>